<comment type="function">
    <text evidence="4">Catalyzes the conversion of geranylgeranyl diphosphate to the phytoalexin precursor syn-copalyl diphosphate.</text>
</comment>
<comment type="catalytic activity">
    <reaction>
        <text>(2E,6E,10E)-geranylgeranyl diphosphate = 9alpha-copalyl diphosphate</text>
        <dbReference type="Rhea" id="RHEA:25524"/>
        <dbReference type="ChEBI" id="CHEBI:58622"/>
        <dbReference type="ChEBI" id="CHEBI:58756"/>
        <dbReference type="EC" id="5.5.1.14"/>
    </reaction>
</comment>
<comment type="cofactor">
    <cofactor evidence="5">
        <name>Mg(2+)</name>
        <dbReference type="ChEBI" id="CHEBI:18420"/>
    </cofactor>
</comment>
<comment type="induction">
    <text evidence="4">By UV irradiation.</text>
</comment>
<comment type="domain">
    <text>The Asp-Xaa-Asp-Asp (DXDD) motif is important for the catalytic activity, presumably through binding to Mg(2+).</text>
</comment>
<comment type="miscellaneous">
    <text>Phytoalexins are diterpenoid secondary metabolites involved in the defense mechanism of the plant and produced in response to attack (by a pathogen, elicitor or UV irradiation).</text>
</comment>
<comment type="sequence caution" evidence="5">
    <conflict type="erroneous gene model prediction">
        <sequence resource="EMBL-CDS" id="EAY93229"/>
    </conflict>
</comment>
<protein>
    <recommendedName>
        <fullName>Syn-copalyl diphosphate synthase</fullName>
        <shortName>OsCPSsyn</shortName>
        <shortName>Syn-CPP synthase</shortName>
        <ecNumber>5.5.1.14</ecNumber>
    </recommendedName>
    <alternativeName>
        <fullName>OsCPS4</fullName>
    </alternativeName>
    <alternativeName>
        <fullName>OsCyc1</fullName>
    </alternativeName>
</protein>
<proteinExistence type="evidence at transcript level"/>
<keyword id="KW-0413">Isomerase</keyword>
<keyword id="KW-0460">Magnesium</keyword>
<keyword id="KW-0479">Metal-binding</keyword>
<keyword id="KW-0611">Plant defense</keyword>
<keyword id="KW-1185">Reference proteome</keyword>
<name>CPS4_ORYSI</name>
<evidence type="ECO:0000250" key="1">
    <source>
        <dbReference type="UniProtKB" id="C7BKP9"/>
    </source>
</evidence>
<evidence type="ECO:0000250" key="2">
    <source>
        <dbReference type="UniProtKB" id="Q38802"/>
    </source>
</evidence>
<evidence type="ECO:0000256" key="3">
    <source>
        <dbReference type="SAM" id="MobiDB-lite"/>
    </source>
</evidence>
<evidence type="ECO:0000269" key="4">
    <source>
    </source>
</evidence>
<evidence type="ECO:0000305" key="5"/>
<reference key="1">
    <citation type="journal article" date="2004" name="Plant J.">
        <title>Functional identification of rice syn-copalyl diphosphate synthase and its role in initiating biosynthesis of diterpenoid phytoalexin/allelopathic natural products.</title>
        <authorList>
            <person name="Xu M."/>
            <person name="Hillwig M.L."/>
            <person name="Prisic S."/>
            <person name="Coates R.M."/>
            <person name="Peters R.J."/>
        </authorList>
    </citation>
    <scope>NUCLEOTIDE SEQUENCE [MRNA]</scope>
    <scope>FUNCTION</scope>
    <scope>INDUCTION</scope>
    <source>
        <strain>cv. IR24</strain>
    </source>
</reference>
<reference key="2">
    <citation type="journal article" date="2005" name="PLoS Biol.">
        <title>The genomes of Oryza sativa: a history of duplications.</title>
        <authorList>
            <person name="Yu J."/>
            <person name="Wang J."/>
            <person name="Lin W."/>
            <person name="Li S."/>
            <person name="Li H."/>
            <person name="Zhou J."/>
            <person name="Ni P."/>
            <person name="Dong W."/>
            <person name="Hu S."/>
            <person name="Zeng C."/>
            <person name="Zhang J."/>
            <person name="Zhang Y."/>
            <person name="Li R."/>
            <person name="Xu Z."/>
            <person name="Li S."/>
            <person name="Li X."/>
            <person name="Zheng H."/>
            <person name="Cong L."/>
            <person name="Lin L."/>
            <person name="Yin J."/>
            <person name="Geng J."/>
            <person name="Li G."/>
            <person name="Shi J."/>
            <person name="Liu J."/>
            <person name="Lv H."/>
            <person name="Li J."/>
            <person name="Wang J."/>
            <person name="Deng Y."/>
            <person name="Ran L."/>
            <person name="Shi X."/>
            <person name="Wang X."/>
            <person name="Wu Q."/>
            <person name="Li C."/>
            <person name="Ren X."/>
            <person name="Wang J."/>
            <person name="Wang X."/>
            <person name="Li D."/>
            <person name="Liu D."/>
            <person name="Zhang X."/>
            <person name="Ji Z."/>
            <person name="Zhao W."/>
            <person name="Sun Y."/>
            <person name="Zhang Z."/>
            <person name="Bao J."/>
            <person name="Han Y."/>
            <person name="Dong L."/>
            <person name="Ji J."/>
            <person name="Chen P."/>
            <person name="Wu S."/>
            <person name="Liu J."/>
            <person name="Xiao Y."/>
            <person name="Bu D."/>
            <person name="Tan J."/>
            <person name="Yang L."/>
            <person name="Ye C."/>
            <person name="Zhang J."/>
            <person name="Xu J."/>
            <person name="Zhou Y."/>
            <person name="Yu Y."/>
            <person name="Zhang B."/>
            <person name="Zhuang S."/>
            <person name="Wei H."/>
            <person name="Liu B."/>
            <person name="Lei M."/>
            <person name="Yu H."/>
            <person name="Li Y."/>
            <person name="Xu H."/>
            <person name="Wei S."/>
            <person name="He X."/>
            <person name="Fang L."/>
            <person name="Zhang Z."/>
            <person name="Zhang Y."/>
            <person name="Huang X."/>
            <person name="Su Z."/>
            <person name="Tong W."/>
            <person name="Li J."/>
            <person name="Tong Z."/>
            <person name="Li S."/>
            <person name="Ye J."/>
            <person name="Wang L."/>
            <person name="Fang L."/>
            <person name="Lei T."/>
            <person name="Chen C.-S."/>
            <person name="Chen H.-C."/>
            <person name="Xu Z."/>
            <person name="Li H."/>
            <person name="Huang H."/>
            <person name="Zhang F."/>
            <person name="Xu H."/>
            <person name="Li N."/>
            <person name="Zhao C."/>
            <person name="Li S."/>
            <person name="Dong L."/>
            <person name="Huang Y."/>
            <person name="Li L."/>
            <person name="Xi Y."/>
            <person name="Qi Q."/>
            <person name="Li W."/>
            <person name="Zhang B."/>
            <person name="Hu W."/>
            <person name="Zhang Y."/>
            <person name="Tian X."/>
            <person name="Jiao Y."/>
            <person name="Liang X."/>
            <person name="Jin J."/>
            <person name="Gao L."/>
            <person name="Zheng W."/>
            <person name="Hao B."/>
            <person name="Liu S.-M."/>
            <person name="Wang W."/>
            <person name="Yuan L."/>
            <person name="Cao M."/>
            <person name="McDermott J."/>
            <person name="Samudrala R."/>
            <person name="Wang J."/>
            <person name="Wong G.K.-S."/>
            <person name="Yang H."/>
        </authorList>
    </citation>
    <scope>NUCLEOTIDE SEQUENCE [LARGE SCALE GENOMIC DNA]</scope>
    <source>
        <strain>cv. 93-11</strain>
    </source>
</reference>
<accession>Q6E7D7</accession>
<accession>A2XQW9</accession>
<sequence>MPVFTASFQCVTLFGQPASAADAQPLLQGQRPFLHLHARRRRPCGPMLISKSPPYPASEETREWEAEGQHEHTDELRETTTTMIDGIRTALRSIGEGEISISAYDTSLVALLKRLDGGDGPQFPSTIDWIVQNQLPDGSWGDASFFMMGDRIMSTLACVVALKSWNIHTDKCERGLLFIQENMWRLAHEEEDWMLVGFEIALPSLLDMAKDLDLDIPYDEPALKAIYAERERKLAKIPRDVLHAMPTTLLHSLEGMVDLDWEKLLKLRCLDGSFHCSPASTATAFQQTGDQKCFEYLDGIVKKFNGGVPCIYPLDVYERLWAVDRLTRLGISRHFTSEIEDCLDYIFRNWTPDGLAHTKNCPVKDIDDTAMGFRLLRLYGYQVDPCVLKKFEKDGKFFCLHGESNPSSVTPMYNTYRASQLKFPGDDGVLGRAEVFCRSFLQDRRGSNRMKDKWAIAKDIPGEVEYAMDYPWKASLPRIETRLYLDQYGGSGDVWIGKVLHRMTLFCNDLYLKAAKADFSNFQKECRVELNGLRRWYLRSNLERFGGTDPQTTLMTSYFLASANIFEPNRAAERLGWARVALLADAVSSHFRRIGGPKNLTSNLEELISLVPFDDAYSGSLREAWKQWLMAWTAKESSQESIEGDTAILLVRAIEIFGGRHVLTGQRPDLWEYSQLEQLTSSICRKLYRRVLAQENGKSTEKVEEIDQQLDLEMQELTRRVLQGCSAINRLTRETFLHVVKSFCYVAYCSPETIDNHIDKVIFQDVI</sequence>
<gene>
    <name type="primary">CPS4</name>
    <name type="synonym">CYC1</name>
    <name type="ORF">OsI_014462</name>
</gene>
<dbReference type="EC" id="5.5.1.14"/>
<dbReference type="EMBL" id="AY530101">
    <property type="protein sequence ID" value="AAS98158.1"/>
    <property type="molecule type" value="mRNA"/>
</dbReference>
<dbReference type="EMBL" id="CM000129">
    <property type="protein sequence ID" value="EAY93229.1"/>
    <property type="status" value="ALT_SEQ"/>
    <property type="molecule type" value="Genomic_DNA"/>
</dbReference>
<dbReference type="SMR" id="Q6E7D7"/>
<dbReference type="STRING" id="39946.Q6E7D7"/>
<dbReference type="HOGENOM" id="CLU_003125_3_2_1"/>
<dbReference type="BRENDA" id="5.5.1.14">
    <property type="organism ID" value="4460"/>
</dbReference>
<dbReference type="Proteomes" id="UP000007015">
    <property type="component" value="Chromosome 4"/>
</dbReference>
<dbReference type="GO" id="GO:0009507">
    <property type="term" value="C:chloroplast"/>
    <property type="evidence" value="ECO:0007669"/>
    <property type="project" value="TreeGrafter"/>
</dbReference>
<dbReference type="GO" id="GO:0000287">
    <property type="term" value="F:magnesium ion binding"/>
    <property type="evidence" value="ECO:0007669"/>
    <property type="project" value="TreeGrafter"/>
</dbReference>
<dbReference type="GO" id="GO:0051498">
    <property type="term" value="F:syn-copalyl diphosphate synthase activity"/>
    <property type="evidence" value="ECO:0007669"/>
    <property type="project" value="UniProtKB-EC"/>
</dbReference>
<dbReference type="GO" id="GO:0010333">
    <property type="term" value="F:terpene synthase activity"/>
    <property type="evidence" value="ECO:0007669"/>
    <property type="project" value="InterPro"/>
</dbReference>
<dbReference type="GO" id="GO:0006952">
    <property type="term" value="P:defense response"/>
    <property type="evidence" value="ECO:0007669"/>
    <property type="project" value="UniProtKB-KW"/>
</dbReference>
<dbReference type="GO" id="GO:0009686">
    <property type="term" value="P:gibberellin biosynthetic process"/>
    <property type="evidence" value="ECO:0007669"/>
    <property type="project" value="TreeGrafter"/>
</dbReference>
<dbReference type="FunFam" id="1.50.10.160:FF:000001">
    <property type="entry name" value="Ent-copalyl diphosphate synthase"/>
    <property type="match status" value="1"/>
</dbReference>
<dbReference type="FunFam" id="1.50.10.130:FF:000002">
    <property type="entry name" value="Ent-copalyl diphosphate synthase, chloroplastic"/>
    <property type="match status" value="1"/>
</dbReference>
<dbReference type="FunFam" id="1.10.600.10:FF:000031">
    <property type="entry name" value="Syn-copalyl diphosphate synthase"/>
    <property type="match status" value="1"/>
</dbReference>
<dbReference type="FunFam" id="1.10.600.10:FF:000032">
    <property type="entry name" value="Syn-copalyl diphosphate synthase"/>
    <property type="match status" value="1"/>
</dbReference>
<dbReference type="Gene3D" id="1.50.10.160">
    <property type="match status" value="1"/>
</dbReference>
<dbReference type="Gene3D" id="1.10.600.10">
    <property type="entry name" value="Farnesyl Diphosphate Synthase"/>
    <property type="match status" value="2"/>
</dbReference>
<dbReference type="Gene3D" id="1.50.10.130">
    <property type="entry name" value="Terpene synthase, N-terminal domain"/>
    <property type="match status" value="1"/>
</dbReference>
<dbReference type="InterPro" id="IPR008949">
    <property type="entry name" value="Isoprenoid_synthase_dom_sf"/>
</dbReference>
<dbReference type="InterPro" id="IPR001906">
    <property type="entry name" value="Terpene_synth_N"/>
</dbReference>
<dbReference type="InterPro" id="IPR036965">
    <property type="entry name" value="Terpene_synth_N_sf"/>
</dbReference>
<dbReference type="InterPro" id="IPR050148">
    <property type="entry name" value="Terpene_synthase-like"/>
</dbReference>
<dbReference type="InterPro" id="IPR008930">
    <property type="entry name" value="Terpenoid_cyclase/PrenylTrfase"/>
</dbReference>
<dbReference type="PANTHER" id="PTHR31739">
    <property type="entry name" value="ENT-COPALYL DIPHOSPHATE SYNTHASE, CHLOROPLASTIC"/>
    <property type="match status" value="1"/>
</dbReference>
<dbReference type="PANTHER" id="PTHR31739:SF4">
    <property type="entry name" value="ENT-COPALYL DIPHOSPHATE SYNTHASE, CHLOROPLASTIC"/>
    <property type="match status" value="1"/>
</dbReference>
<dbReference type="Pfam" id="PF01397">
    <property type="entry name" value="Terpene_synth"/>
    <property type="match status" value="1"/>
</dbReference>
<dbReference type="SFLD" id="SFLDG01014">
    <property type="entry name" value="Terpene_Cyclase_Like_1_N-term"/>
    <property type="match status" value="1"/>
</dbReference>
<dbReference type="SFLD" id="SFLDG01605">
    <property type="entry name" value="Terpene_Cyclase_Like_1_N-term"/>
    <property type="match status" value="1"/>
</dbReference>
<dbReference type="SUPFAM" id="SSF48239">
    <property type="entry name" value="Terpenoid cyclases/Protein prenyltransferases"/>
    <property type="match status" value="2"/>
</dbReference>
<dbReference type="SUPFAM" id="SSF48576">
    <property type="entry name" value="Terpenoid synthases"/>
    <property type="match status" value="1"/>
</dbReference>
<feature type="chain" id="PRO_0000372329" description="Syn-copalyl diphosphate synthase">
    <location>
        <begin position="1"/>
        <end position="767"/>
    </location>
</feature>
<feature type="region of interest" description="Disordered" evidence="3">
    <location>
        <begin position="45"/>
        <end position="74"/>
    </location>
</feature>
<feature type="short sequence motif" description="DXDD motif">
    <location>
        <begin position="365"/>
        <end position="368"/>
    </location>
</feature>
<feature type="compositionally biased region" description="Basic and acidic residues" evidence="3">
    <location>
        <begin position="59"/>
        <end position="74"/>
    </location>
</feature>
<feature type="binding site" evidence="2">
    <location>
        <position position="233"/>
    </location>
    <ligand>
        <name>substrate</name>
    </ligand>
</feature>
<feature type="binding site" evidence="1">
    <location>
        <position position="365"/>
    </location>
    <ligand>
        <name>Mg(2+)</name>
        <dbReference type="ChEBI" id="CHEBI:18420"/>
    </ligand>
</feature>
<feature type="binding site" evidence="1">
    <location>
        <position position="367"/>
    </location>
    <ligand>
        <name>Mg(2+)</name>
        <dbReference type="ChEBI" id="CHEBI:18420"/>
    </ligand>
</feature>
<feature type="binding site" evidence="2">
    <location>
        <position position="453"/>
    </location>
    <ligand>
        <name>substrate</name>
    </ligand>
</feature>
<organism>
    <name type="scientific">Oryza sativa subsp. indica</name>
    <name type="common">Rice</name>
    <dbReference type="NCBI Taxonomy" id="39946"/>
    <lineage>
        <taxon>Eukaryota</taxon>
        <taxon>Viridiplantae</taxon>
        <taxon>Streptophyta</taxon>
        <taxon>Embryophyta</taxon>
        <taxon>Tracheophyta</taxon>
        <taxon>Spermatophyta</taxon>
        <taxon>Magnoliopsida</taxon>
        <taxon>Liliopsida</taxon>
        <taxon>Poales</taxon>
        <taxon>Poaceae</taxon>
        <taxon>BOP clade</taxon>
        <taxon>Oryzoideae</taxon>
        <taxon>Oryzeae</taxon>
        <taxon>Oryzinae</taxon>
        <taxon>Oryza</taxon>
        <taxon>Oryza sativa</taxon>
    </lineage>
</organism>